<protein>
    <recommendedName>
        <fullName evidence="1">UPF0235 protein Asuc_1977</fullName>
    </recommendedName>
</protein>
<evidence type="ECO:0000255" key="1">
    <source>
        <dbReference type="HAMAP-Rule" id="MF_00634"/>
    </source>
</evidence>
<proteinExistence type="inferred from homology"/>
<organism>
    <name type="scientific">Actinobacillus succinogenes (strain ATCC 55618 / DSM 22257 / CCUG 43843 / 130Z)</name>
    <dbReference type="NCBI Taxonomy" id="339671"/>
    <lineage>
        <taxon>Bacteria</taxon>
        <taxon>Pseudomonadati</taxon>
        <taxon>Pseudomonadota</taxon>
        <taxon>Gammaproteobacteria</taxon>
        <taxon>Pasteurellales</taxon>
        <taxon>Pasteurellaceae</taxon>
        <taxon>Actinobacillus</taxon>
    </lineage>
</organism>
<feature type="chain" id="PRO_1000072665" description="UPF0235 protein Asuc_1977">
    <location>
        <begin position="1"/>
        <end position="98"/>
    </location>
</feature>
<reference key="1">
    <citation type="journal article" date="2010" name="BMC Genomics">
        <title>A genomic perspective on the potential of Actinobacillus succinogenes for industrial succinate production.</title>
        <authorList>
            <person name="McKinlay J.B."/>
            <person name="Laivenieks M."/>
            <person name="Schindler B.D."/>
            <person name="McKinlay A.A."/>
            <person name="Siddaramappa S."/>
            <person name="Challacombe J.F."/>
            <person name="Lowry S.R."/>
            <person name="Clum A."/>
            <person name="Lapidus A.L."/>
            <person name="Burkhart K.B."/>
            <person name="Harkins V."/>
            <person name="Vieille C."/>
        </authorList>
    </citation>
    <scope>NUCLEOTIDE SEQUENCE [LARGE SCALE GENOMIC DNA]</scope>
    <source>
        <strain>ATCC 55618 / DSM 22257 / CCUG 43843 / 130Z</strain>
    </source>
</reference>
<name>Y1977_ACTSZ</name>
<sequence length="98" mass="10757">MTAVEQTADGIRLRIMLQPKASKDAIIGLHDEELKISITAPPVDGAANAHLIKYLSKAFKVPKSAVQLEKGELNRHKQVFIPAPKIIPEAVRQLLDNP</sequence>
<accession>A6VQS7</accession>
<comment type="similarity">
    <text evidence="1">Belongs to the UPF0235 family.</text>
</comment>
<gene>
    <name type="ordered locus">Asuc_1977</name>
</gene>
<keyword id="KW-1185">Reference proteome</keyword>
<dbReference type="EMBL" id="CP000746">
    <property type="protein sequence ID" value="ABR75324.1"/>
    <property type="molecule type" value="Genomic_DNA"/>
</dbReference>
<dbReference type="RefSeq" id="WP_012073701.1">
    <property type="nucleotide sequence ID" value="NC_009655.1"/>
</dbReference>
<dbReference type="SMR" id="A6VQS7"/>
<dbReference type="STRING" id="339671.Asuc_1977"/>
<dbReference type="KEGG" id="asu:Asuc_1977"/>
<dbReference type="eggNOG" id="COG1872">
    <property type="taxonomic scope" value="Bacteria"/>
</dbReference>
<dbReference type="HOGENOM" id="CLU_130694_5_0_6"/>
<dbReference type="OrthoDB" id="9800587at2"/>
<dbReference type="Proteomes" id="UP000001114">
    <property type="component" value="Chromosome"/>
</dbReference>
<dbReference type="GO" id="GO:0005737">
    <property type="term" value="C:cytoplasm"/>
    <property type="evidence" value="ECO:0007669"/>
    <property type="project" value="TreeGrafter"/>
</dbReference>
<dbReference type="Gene3D" id="3.30.1200.10">
    <property type="entry name" value="YggU-like"/>
    <property type="match status" value="1"/>
</dbReference>
<dbReference type="HAMAP" id="MF_00634">
    <property type="entry name" value="UPF0235"/>
    <property type="match status" value="1"/>
</dbReference>
<dbReference type="InterPro" id="IPR003746">
    <property type="entry name" value="DUF167"/>
</dbReference>
<dbReference type="InterPro" id="IPR036591">
    <property type="entry name" value="YggU-like_sf"/>
</dbReference>
<dbReference type="NCBIfam" id="TIGR00251">
    <property type="entry name" value="DUF167 family protein"/>
    <property type="match status" value="1"/>
</dbReference>
<dbReference type="NCBIfam" id="NF003466">
    <property type="entry name" value="PRK05090.1"/>
    <property type="match status" value="1"/>
</dbReference>
<dbReference type="PANTHER" id="PTHR13420">
    <property type="entry name" value="UPF0235 PROTEIN C15ORF40"/>
    <property type="match status" value="1"/>
</dbReference>
<dbReference type="PANTHER" id="PTHR13420:SF7">
    <property type="entry name" value="UPF0235 PROTEIN C15ORF40"/>
    <property type="match status" value="1"/>
</dbReference>
<dbReference type="Pfam" id="PF02594">
    <property type="entry name" value="DUF167"/>
    <property type="match status" value="1"/>
</dbReference>
<dbReference type="SMART" id="SM01152">
    <property type="entry name" value="DUF167"/>
    <property type="match status" value="1"/>
</dbReference>
<dbReference type="SUPFAM" id="SSF69786">
    <property type="entry name" value="YggU-like"/>
    <property type="match status" value="1"/>
</dbReference>